<comment type="function">
    <text evidence="1">Synthesizes selenophosphate from selenide and ATP.</text>
</comment>
<comment type="catalytic activity">
    <reaction evidence="1">
        <text>hydrogenselenide + ATP + H2O = selenophosphate + AMP + phosphate + 2 H(+)</text>
        <dbReference type="Rhea" id="RHEA:18737"/>
        <dbReference type="ChEBI" id="CHEBI:15377"/>
        <dbReference type="ChEBI" id="CHEBI:15378"/>
        <dbReference type="ChEBI" id="CHEBI:16144"/>
        <dbReference type="ChEBI" id="CHEBI:29317"/>
        <dbReference type="ChEBI" id="CHEBI:30616"/>
        <dbReference type="ChEBI" id="CHEBI:43474"/>
        <dbReference type="ChEBI" id="CHEBI:456215"/>
        <dbReference type="EC" id="2.7.9.3"/>
    </reaction>
</comment>
<comment type="cofactor">
    <cofactor evidence="1">
        <name>Mg(2+)</name>
        <dbReference type="ChEBI" id="CHEBI:18420"/>
    </cofactor>
    <text evidence="1">Binds 1 Mg(2+) ion per monomer.</text>
</comment>
<comment type="subunit">
    <text evidence="1">Homodimer.</text>
</comment>
<comment type="similarity">
    <text evidence="1">Belongs to the selenophosphate synthase 1 family. Class I subfamily.</text>
</comment>
<proteinExistence type="inferred from homology"/>
<keyword id="KW-0067">ATP-binding</keyword>
<keyword id="KW-0418">Kinase</keyword>
<keyword id="KW-0460">Magnesium</keyword>
<keyword id="KW-0479">Metal-binding</keyword>
<keyword id="KW-0547">Nucleotide-binding</keyword>
<keyword id="KW-0711">Selenium</keyword>
<keyword id="KW-0808">Transferase</keyword>
<organism>
    <name type="scientific">Shewanella baltica (strain OS223)</name>
    <dbReference type="NCBI Taxonomy" id="407976"/>
    <lineage>
        <taxon>Bacteria</taxon>
        <taxon>Pseudomonadati</taxon>
        <taxon>Pseudomonadota</taxon>
        <taxon>Gammaproteobacteria</taxon>
        <taxon>Alteromonadales</taxon>
        <taxon>Shewanellaceae</taxon>
        <taxon>Shewanella</taxon>
    </lineage>
</organism>
<gene>
    <name evidence="1" type="primary">selD</name>
    <name type="ordered locus">Sbal223_4080</name>
</gene>
<reference key="1">
    <citation type="submission" date="2008-12" db="EMBL/GenBank/DDBJ databases">
        <title>Complete sequence of chromosome of Shewanella baltica OS223.</title>
        <authorList>
            <consortium name="US DOE Joint Genome Institute"/>
            <person name="Lucas S."/>
            <person name="Copeland A."/>
            <person name="Lapidus A."/>
            <person name="Glavina del Rio T."/>
            <person name="Dalin E."/>
            <person name="Tice H."/>
            <person name="Bruce D."/>
            <person name="Goodwin L."/>
            <person name="Pitluck S."/>
            <person name="Chertkov O."/>
            <person name="Meincke L."/>
            <person name="Brettin T."/>
            <person name="Detter J.C."/>
            <person name="Han C."/>
            <person name="Kuske C.R."/>
            <person name="Larimer F."/>
            <person name="Land M."/>
            <person name="Hauser L."/>
            <person name="Kyrpides N."/>
            <person name="Ovchinnikova G."/>
            <person name="Brettar I."/>
            <person name="Rodrigues J."/>
            <person name="Konstantinidis K."/>
            <person name="Tiedje J."/>
        </authorList>
    </citation>
    <scope>NUCLEOTIDE SEQUENCE [LARGE SCALE GENOMIC DNA]</scope>
    <source>
        <strain>OS223</strain>
    </source>
</reference>
<accession>B8EBM9</accession>
<sequence>MSDSPVTLPESIKLTEYSHGAGCGCKISPKVLSTILASQLPVFTDPNLLVGNQSRDDAAVYKLNDDIGIISTTDFFMPIVDDPFTFGRIAATNAISDIYAMGGTPIMAIAILGWPINKLPAEVAQQVVDGGRQACMEAGIMLAGGHSIDAPEPIFGLAVTGQIALTDLKQNDTAKAGDRLYLTKPIGIGILTTAQKQKKLQDEDSHIAVNAMCQLNTIGTTIAKISGVNALTDVTGFGLAGHLLEMCQGTKLTAKLKFDAVPLLPRALDYLALGCVPGGTHRNYDSYGEHLPELSEHQKAILCDPQTSGGLLVAVSAEAEAELIALLDAHHIAPICIGSLETPTTEANVVLY</sequence>
<protein>
    <recommendedName>
        <fullName evidence="1">Selenide, water dikinase</fullName>
        <ecNumber evidence="1">2.7.9.3</ecNumber>
    </recommendedName>
    <alternativeName>
        <fullName evidence="1">Selenium donor protein</fullName>
    </alternativeName>
    <alternativeName>
        <fullName evidence="1">Selenophosphate synthase</fullName>
    </alternativeName>
</protein>
<feature type="chain" id="PRO_1000147248" description="Selenide, water dikinase">
    <location>
        <begin position="1"/>
        <end position="352"/>
    </location>
</feature>
<feature type="active site" evidence="1">
    <location>
        <position position="23"/>
    </location>
</feature>
<feature type="binding site" description="in other chain" evidence="1">
    <location>
        <position position="26"/>
    </location>
    <ligand>
        <name>ATP</name>
        <dbReference type="ChEBI" id="CHEBI:30616"/>
        <note>ligand shared between dimeric partners</note>
    </ligand>
</feature>
<feature type="binding site" description="in other chain" evidence="1">
    <location>
        <begin position="54"/>
        <end position="56"/>
    </location>
    <ligand>
        <name>ATP</name>
        <dbReference type="ChEBI" id="CHEBI:30616"/>
        <note>ligand shared between dimeric partners</note>
    </ligand>
</feature>
<feature type="binding site" evidence="1">
    <location>
        <position position="57"/>
    </location>
    <ligand>
        <name>Mg(2+)</name>
        <dbReference type="ChEBI" id="CHEBI:18420"/>
    </ligand>
</feature>
<feature type="binding site" description="in other chain" evidence="1">
    <location>
        <position position="74"/>
    </location>
    <ligand>
        <name>ATP</name>
        <dbReference type="ChEBI" id="CHEBI:30616"/>
        <note>ligand shared between dimeric partners</note>
    </ligand>
</feature>
<feature type="binding site" description="in other chain" evidence="1">
    <location>
        <position position="97"/>
    </location>
    <ligand>
        <name>ATP</name>
        <dbReference type="ChEBI" id="CHEBI:30616"/>
        <note>ligand shared between dimeric partners</note>
    </ligand>
</feature>
<feature type="binding site" evidence="1">
    <location>
        <position position="97"/>
    </location>
    <ligand>
        <name>Mg(2+)</name>
        <dbReference type="ChEBI" id="CHEBI:18420"/>
    </ligand>
</feature>
<feature type="binding site" evidence="1">
    <location>
        <begin position="145"/>
        <end position="147"/>
    </location>
    <ligand>
        <name>ATP</name>
        <dbReference type="ChEBI" id="CHEBI:30616"/>
        <note>ligand shared between dimeric partners</note>
    </ligand>
</feature>
<feature type="binding site" evidence="1">
    <location>
        <position position="233"/>
    </location>
    <ligand>
        <name>Mg(2+)</name>
        <dbReference type="ChEBI" id="CHEBI:18420"/>
    </ligand>
</feature>
<feature type="site" description="Important for catalytic activity" evidence="1">
    <location>
        <position position="26"/>
    </location>
</feature>
<evidence type="ECO:0000255" key="1">
    <source>
        <dbReference type="HAMAP-Rule" id="MF_00625"/>
    </source>
</evidence>
<dbReference type="EC" id="2.7.9.3" evidence="1"/>
<dbReference type="EMBL" id="CP001252">
    <property type="protein sequence ID" value="ACK48553.1"/>
    <property type="molecule type" value="Genomic_DNA"/>
</dbReference>
<dbReference type="RefSeq" id="WP_012588814.1">
    <property type="nucleotide sequence ID" value="NC_011663.1"/>
</dbReference>
<dbReference type="SMR" id="B8EBM9"/>
<dbReference type="KEGG" id="sbp:Sbal223_4080"/>
<dbReference type="HOGENOM" id="CLU_032859_0_1_6"/>
<dbReference type="Proteomes" id="UP000002507">
    <property type="component" value="Chromosome"/>
</dbReference>
<dbReference type="GO" id="GO:0005737">
    <property type="term" value="C:cytoplasm"/>
    <property type="evidence" value="ECO:0007669"/>
    <property type="project" value="TreeGrafter"/>
</dbReference>
<dbReference type="GO" id="GO:0005524">
    <property type="term" value="F:ATP binding"/>
    <property type="evidence" value="ECO:0007669"/>
    <property type="project" value="UniProtKB-UniRule"/>
</dbReference>
<dbReference type="GO" id="GO:0000287">
    <property type="term" value="F:magnesium ion binding"/>
    <property type="evidence" value="ECO:0007669"/>
    <property type="project" value="UniProtKB-UniRule"/>
</dbReference>
<dbReference type="GO" id="GO:0004756">
    <property type="term" value="F:selenide, water dikinase activity"/>
    <property type="evidence" value="ECO:0007669"/>
    <property type="project" value="UniProtKB-UniRule"/>
</dbReference>
<dbReference type="GO" id="GO:0016260">
    <property type="term" value="P:selenocysteine biosynthetic process"/>
    <property type="evidence" value="ECO:0007669"/>
    <property type="project" value="InterPro"/>
</dbReference>
<dbReference type="CDD" id="cd02195">
    <property type="entry name" value="SelD"/>
    <property type="match status" value="1"/>
</dbReference>
<dbReference type="FunFam" id="3.30.1330.10:FF:000003">
    <property type="entry name" value="Selenide, water dikinase"/>
    <property type="match status" value="1"/>
</dbReference>
<dbReference type="FunFam" id="3.90.650.10:FF:000004">
    <property type="entry name" value="Selenide, water dikinase"/>
    <property type="match status" value="1"/>
</dbReference>
<dbReference type="Gene3D" id="3.90.650.10">
    <property type="entry name" value="PurM-like C-terminal domain"/>
    <property type="match status" value="1"/>
</dbReference>
<dbReference type="Gene3D" id="3.30.1330.10">
    <property type="entry name" value="PurM-like, N-terminal domain"/>
    <property type="match status" value="1"/>
</dbReference>
<dbReference type="HAMAP" id="MF_00625">
    <property type="entry name" value="SelD"/>
    <property type="match status" value="1"/>
</dbReference>
<dbReference type="InterPro" id="IPR010918">
    <property type="entry name" value="PurM-like_C_dom"/>
</dbReference>
<dbReference type="InterPro" id="IPR036676">
    <property type="entry name" value="PurM-like_C_sf"/>
</dbReference>
<dbReference type="InterPro" id="IPR016188">
    <property type="entry name" value="PurM-like_N"/>
</dbReference>
<dbReference type="InterPro" id="IPR036921">
    <property type="entry name" value="PurM-like_N_sf"/>
</dbReference>
<dbReference type="InterPro" id="IPR023061">
    <property type="entry name" value="SelD_I"/>
</dbReference>
<dbReference type="InterPro" id="IPR004536">
    <property type="entry name" value="SPS/SelD"/>
</dbReference>
<dbReference type="NCBIfam" id="NF002098">
    <property type="entry name" value="PRK00943.1"/>
    <property type="match status" value="1"/>
</dbReference>
<dbReference type="NCBIfam" id="TIGR00476">
    <property type="entry name" value="selD"/>
    <property type="match status" value="1"/>
</dbReference>
<dbReference type="PANTHER" id="PTHR10256:SF0">
    <property type="entry name" value="INACTIVE SELENIDE, WATER DIKINASE-LIKE PROTEIN-RELATED"/>
    <property type="match status" value="1"/>
</dbReference>
<dbReference type="PANTHER" id="PTHR10256">
    <property type="entry name" value="SELENIDE, WATER DIKINASE"/>
    <property type="match status" value="1"/>
</dbReference>
<dbReference type="Pfam" id="PF00586">
    <property type="entry name" value="AIRS"/>
    <property type="match status" value="1"/>
</dbReference>
<dbReference type="Pfam" id="PF02769">
    <property type="entry name" value="AIRS_C"/>
    <property type="match status" value="1"/>
</dbReference>
<dbReference type="PIRSF" id="PIRSF036407">
    <property type="entry name" value="Selenphspht_syn"/>
    <property type="match status" value="1"/>
</dbReference>
<dbReference type="SUPFAM" id="SSF56042">
    <property type="entry name" value="PurM C-terminal domain-like"/>
    <property type="match status" value="1"/>
</dbReference>
<dbReference type="SUPFAM" id="SSF55326">
    <property type="entry name" value="PurM N-terminal domain-like"/>
    <property type="match status" value="1"/>
</dbReference>
<name>SELD_SHEB2</name>